<proteinExistence type="inferred from homology"/>
<evidence type="ECO:0000255" key="1">
    <source>
        <dbReference type="HAMAP-Rule" id="MF_00154"/>
    </source>
</evidence>
<evidence type="ECO:0000305" key="2"/>
<name>COXX_STAAM</name>
<sequence length="303" mass="33859">MSKEHTLSQNISRVNFKELQQIIKMGLVQGNLIPAFAGAWLAVVMTNHSFLSSIPQILLMLFGSTLIMGGACALNNYYDQDIDRIMPSKQNRPTVNNRITDQNLLLLSFGMMLVGEICLFLLNIPSGVLGLMGIVGYVSYYSIWSKRHTTWNTVIGSFPGAVPPLIGWVAIEGQISLTAIALFLVVFCWQPIHFYALAIKRKDEYALANIPMLPSVKGFKRTRVSMFIWLIILLPVPLLLINLGVVFVVLATLLNLGWIALGLTTFKKNSDQTKWATQMFIYSLNYLVIFFVLAVIVSLLTLI</sequence>
<accession>Q99UY7</accession>
<protein>
    <recommendedName>
        <fullName evidence="1">Protoheme IX farnesyltransferase</fullName>
        <ecNumber evidence="1">2.5.1.141</ecNumber>
    </recommendedName>
    <alternativeName>
        <fullName evidence="1">Heme B farnesyltransferase</fullName>
    </alternativeName>
    <alternativeName>
        <fullName evidence="1">Heme O synthase</fullName>
    </alternativeName>
</protein>
<keyword id="KW-1003">Cell membrane</keyword>
<keyword id="KW-0350">Heme biosynthesis</keyword>
<keyword id="KW-0472">Membrane</keyword>
<keyword id="KW-0808">Transferase</keyword>
<keyword id="KW-0812">Transmembrane</keyword>
<keyword id="KW-1133">Transmembrane helix</keyword>
<comment type="function">
    <text evidence="1">Converts heme B (protoheme IX) to heme O by substitution of the vinyl group on carbon 2 of heme B porphyrin ring with a hydroxyethyl farnesyl side group.</text>
</comment>
<comment type="catalytic activity">
    <reaction evidence="1">
        <text>heme b + (2E,6E)-farnesyl diphosphate + H2O = Fe(II)-heme o + diphosphate</text>
        <dbReference type="Rhea" id="RHEA:28070"/>
        <dbReference type="ChEBI" id="CHEBI:15377"/>
        <dbReference type="ChEBI" id="CHEBI:33019"/>
        <dbReference type="ChEBI" id="CHEBI:60344"/>
        <dbReference type="ChEBI" id="CHEBI:60530"/>
        <dbReference type="ChEBI" id="CHEBI:175763"/>
        <dbReference type="EC" id="2.5.1.141"/>
    </reaction>
</comment>
<comment type="pathway">
    <text evidence="1">Porphyrin-containing compound metabolism; heme O biosynthesis; heme O from protoheme: step 1/1.</text>
</comment>
<comment type="subunit">
    <text evidence="1">Interacts with CtaA.</text>
</comment>
<comment type="subcellular location">
    <subcellularLocation>
        <location evidence="1">Cell membrane</location>
        <topology evidence="1">Multi-pass membrane protein</topology>
    </subcellularLocation>
</comment>
<comment type="miscellaneous">
    <text evidence="1">Carbon 2 of the heme B porphyrin ring is defined according to the Fischer nomenclature.</text>
</comment>
<comment type="similarity">
    <text evidence="1">Belongs to the UbiA prenyltransferase family. Protoheme IX farnesyltransferase subfamily.</text>
</comment>
<comment type="sequence caution" evidence="2">
    <conflict type="erroneous initiation">
        <sequence resource="EMBL-CDS" id="BAB57278"/>
    </conflict>
</comment>
<organism>
    <name type="scientific">Staphylococcus aureus (strain Mu50 / ATCC 700699)</name>
    <dbReference type="NCBI Taxonomy" id="158878"/>
    <lineage>
        <taxon>Bacteria</taxon>
        <taxon>Bacillati</taxon>
        <taxon>Bacillota</taxon>
        <taxon>Bacilli</taxon>
        <taxon>Bacillales</taxon>
        <taxon>Staphylococcaceae</taxon>
        <taxon>Staphylococcus</taxon>
    </lineage>
</organism>
<reference key="1">
    <citation type="journal article" date="2001" name="Lancet">
        <title>Whole genome sequencing of meticillin-resistant Staphylococcus aureus.</title>
        <authorList>
            <person name="Kuroda M."/>
            <person name="Ohta T."/>
            <person name="Uchiyama I."/>
            <person name="Baba T."/>
            <person name="Yuzawa H."/>
            <person name="Kobayashi I."/>
            <person name="Cui L."/>
            <person name="Oguchi A."/>
            <person name="Aoki K."/>
            <person name="Nagai Y."/>
            <person name="Lian J.-Q."/>
            <person name="Ito T."/>
            <person name="Kanamori M."/>
            <person name="Matsumaru H."/>
            <person name="Maruyama A."/>
            <person name="Murakami H."/>
            <person name="Hosoyama A."/>
            <person name="Mizutani-Ui Y."/>
            <person name="Takahashi N.K."/>
            <person name="Sawano T."/>
            <person name="Inoue R."/>
            <person name="Kaito C."/>
            <person name="Sekimizu K."/>
            <person name="Hirakawa H."/>
            <person name="Kuhara S."/>
            <person name="Goto S."/>
            <person name="Yabuzaki J."/>
            <person name="Kanehisa M."/>
            <person name="Yamashita A."/>
            <person name="Oshima K."/>
            <person name="Furuya K."/>
            <person name="Yoshino C."/>
            <person name="Shiba T."/>
            <person name="Hattori M."/>
            <person name="Ogasawara N."/>
            <person name="Hayashi H."/>
            <person name="Hiramatsu K."/>
        </authorList>
    </citation>
    <scope>NUCLEOTIDE SEQUENCE [LARGE SCALE GENOMIC DNA]</scope>
    <source>
        <strain>Mu50 / ATCC 700699</strain>
    </source>
</reference>
<gene>
    <name evidence="1" type="primary">ctaB</name>
    <name type="ordered locus">SAV1116</name>
</gene>
<dbReference type="EC" id="2.5.1.141" evidence="1"/>
<dbReference type="EMBL" id="BA000017">
    <property type="protein sequence ID" value="BAB57278.1"/>
    <property type="status" value="ALT_INIT"/>
    <property type="molecule type" value="Genomic_DNA"/>
</dbReference>
<dbReference type="SMR" id="Q99UY7"/>
<dbReference type="KEGG" id="sav:SAV1116"/>
<dbReference type="HOGENOM" id="CLU_029631_0_0_9"/>
<dbReference type="UniPathway" id="UPA00834">
    <property type="reaction ID" value="UER00712"/>
</dbReference>
<dbReference type="Proteomes" id="UP000002481">
    <property type="component" value="Chromosome"/>
</dbReference>
<dbReference type="GO" id="GO:0005886">
    <property type="term" value="C:plasma membrane"/>
    <property type="evidence" value="ECO:0007669"/>
    <property type="project" value="UniProtKB-SubCell"/>
</dbReference>
<dbReference type="GO" id="GO:0008495">
    <property type="term" value="F:protoheme IX farnesyltransferase activity"/>
    <property type="evidence" value="ECO:0007669"/>
    <property type="project" value="UniProtKB-UniRule"/>
</dbReference>
<dbReference type="GO" id="GO:0048034">
    <property type="term" value="P:heme O biosynthetic process"/>
    <property type="evidence" value="ECO:0007669"/>
    <property type="project" value="UniProtKB-UniRule"/>
</dbReference>
<dbReference type="CDD" id="cd13957">
    <property type="entry name" value="PT_UbiA_Cox10"/>
    <property type="match status" value="1"/>
</dbReference>
<dbReference type="Gene3D" id="1.10.357.140">
    <property type="entry name" value="UbiA prenyltransferase"/>
    <property type="match status" value="1"/>
</dbReference>
<dbReference type="HAMAP" id="MF_00154">
    <property type="entry name" value="CyoE_CtaB"/>
    <property type="match status" value="1"/>
</dbReference>
<dbReference type="InterPro" id="IPR006369">
    <property type="entry name" value="Protohaem_IX_farnesylTrfase"/>
</dbReference>
<dbReference type="InterPro" id="IPR000537">
    <property type="entry name" value="UbiA_prenyltransferase"/>
</dbReference>
<dbReference type="InterPro" id="IPR044878">
    <property type="entry name" value="UbiA_sf"/>
</dbReference>
<dbReference type="NCBIfam" id="TIGR01473">
    <property type="entry name" value="cyoE_ctaB"/>
    <property type="match status" value="1"/>
</dbReference>
<dbReference type="PANTHER" id="PTHR43448">
    <property type="entry name" value="PROTOHEME IX FARNESYLTRANSFERASE, MITOCHONDRIAL"/>
    <property type="match status" value="1"/>
</dbReference>
<dbReference type="PANTHER" id="PTHR43448:SF2">
    <property type="entry name" value="PROTOHEME IX FARNESYLTRANSFERASE, MITOCHONDRIAL"/>
    <property type="match status" value="1"/>
</dbReference>
<dbReference type="Pfam" id="PF01040">
    <property type="entry name" value="UbiA"/>
    <property type="match status" value="1"/>
</dbReference>
<feature type="chain" id="PRO_0000327159" description="Protoheme IX farnesyltransferase">
    <location>
        <begin position="1"/>
        <end position="303"/>
    </location>
</feature>
<feature type="transmembrane region" description="Helical" evidence="1">
    <location>
        <begin position="25"/>
        <end position="45"/>
    </location>
</feature>
<feature type="transmembrane region" description="Helical" evidence="1">
    <location>
        <begin position="54"/>
        <end position="74"/>
    </location>
</feature>
<feature type="transmembrane region" description="Helical" evidence="1">
    <location>
        <begin position="104"/>
        <end position="124"/>
    </location>
</feature>
<feature type="transmembrane region" description="Helical" evidence="1">
    <location>
        <begin position="125"/>
        <end position="145"/>
    </location>
</feature>
<feature type="transmembrane region" description="Helical" evidence="1">
    <location>
        <begin position="151"/>
        <end position="171"/>
    </location>
</feature>
<feature type="transmembrane region" description="Helical" evidence="1">
    <location>
        <begin position="179"/>
        <end position="199"/>
    </location>
</feature>
<feature type="transmembrane region" description="Helical" evidence="1">
    <location>
        <begin position="227"/>
        <end position="247"/>
    </location>
</feature>
<feature type="transmembrane region" description="Helical" evidence="1">
    <location>
        <begin position="248"/>
        <end position="268"/>
    </location>
</feature>
<feature type="transmembrane region" description="Helical" evidence="1">
    <location>
        <begin position="280"/>
        <end position="300"/>
    </location>
</feature>